<dbReference type="EC" id="6.1.1.23" evidence="1"/>
<dbReference type="EMBL" id="CP000393">
    <property type="protein sequence ID" value="ABG51574.1"/>
    <property type="molecule type" value="Genomic_DNA"/>
</dbReference>
<dbReference type="RefSeq" id="WP_011611941.1">
    <property type="nucleotide sequence ID" value="NC_008312.1"/>
</dbReference>
<dbReference type="SMR" id="Q112K0"/>
<dbReference type="STRING" id="203124.Tery_2354"/>
<dbReference type="KEGG" id="ter:Tery_2354"/>
<dbReference type="eggNOG" id="COG0173">
    <property type="taxonomic scope" value="Bacteria"/>
</dbReference>
<dbReference type="HOGENOM" id="CLU_014330_3_2_3"/>
<dbReference type="OrthoDB" id="9802326at2"/>
<dbReference type="GO" id="GO:0005737">
    <property type="term" value="C:cytoplasm"/>
    <property type="evidence" value="ECO:0007669"/>
    <property type="project" value="UniProtKB-SubCell"/>
</dbReference>
<dbReference type="GO" id="GO:0004815">
    <property type="term" value="F:aspartate-tRNA ligase activity"/>
    <property type="evidence" value="ECO:0007669"/>
    <property type="project" value="UniProtKB-UniRule"/>
</dbReference>
<dbReference type="GO" id="GO:0050560">
    <property type="term" value="F:aspartate-tRNA(Asn) ligase activity"/>
    <property type="evidence" value="ECO:0007669"/>
    <property type="project" value="UniProtKB-EC"/>
</dbReference>
<dbReference type="GO" id="GO:0005524">
    <property type="term" value="F:ATP binding"/>
    <property type="evidence" value="ECO:0007669"/>
    <property type="project" value="UniProtKB-UniRule"/>
</dbReference>
<dbReference type="GO" id="GO:0003676">
    <property type="term" value="F:nucleic acid binding"/>
    <property type="evidence" value="ECO:0007669"/>
    <property type="project" value="InterPro"/>
</dbReference>
<dbReference type="GO" id="GO:0006422">
    <property type="term" value="P:aspartyl-tRNA aminoacylation"/>
    <property type="evidence" value="ECO:0007669"/>
    <property type="project" value="UniProtKB-UniRule"/>
</dbReference>
<dbReference type="CDD" id="cd00777">
    <property type="entry name" value="AspRS_core"/>
    <property type="match status" value="1"/>
</dbReference>
<dbReference type="CDD" id="cd04317">
    <property type="entry name" value="EcAspRS_like_N"/>
    <property type="match status" value="1"/>
</dbReference>
<dbReference type="Gene3D" id="3.30.930.10">
    <property type="entry name" value="Bira Bifunctional Protein, Domain 2"/>
    <property type="match status" value="1"/>
</dbReference>
<dbReference type="Gene3D" id="3.30.1360.30">
    <property type="entry name" value="GAD-like domain"/>
    <property type="match status" value="1"/>
</dbReference>
<dbReference type="Gene3D" id="2.40.50.140">
    <property type="entry name" value="Nucleic acid-binding proteins"/>
    <property type="match status" value="1"/>
</dbReference>
<dbReference type="HAMAP" id="MF_00044">
    <property type="entry name" value="Asp_tRNA_synth_type1"/>
    <property type="match status" value="1"/>
</dbReference>
<dbReference type="InterPro" id="IPR004364">
    <property type="entry name" value="Aa-tRNA-synt_II"/>
</dbReference>
<dbReference type="InterPro" id="IPR006195">
    <property type="entry name" value="aa-tRNA-synth_II"/>
</dbReference>
<dbReference type="InterPro" id="IPR045864">
    <property type="entry name" value="aa-tRNA-synth_II/BPL/LPL"/>
</dbReference>
<dbReference type="InterPro" id="IPR004524">
    <property type="entry name" value="Asp-tRNA-ligase_1"/>
</dbReference>
<dbReference type="InterPro" id="IPR047089">
    <property type="entry name" value="Asp-tRNA-ligase_1_N"/>
</dbReference>
<dbReference type="InterPro" id="IPR002312">
    <property type="entry name" value="Asp/Asn-tRNA-synth_IIb"/>
</dbReference>
<dbReference type="InterPro" id="IPR047090">
    <property type="entry name" value="AspRS_core"/>
</dbReference>
<dbReference type="InterPro" id="IPR004115">
    <property type="entry name" value="GAD-like_sf"/>
</dbReference>
<dbReference type="InterPro" id="IPR029351">
    <property type="entry name" value="GAD_dom"/>
</dbReference>
<dbReference type="InterPro" id="IPR012340">
    <property type="entry name" value="NA-bd_OB-fold"/>
</dbReference>
<dbReference type="InterPro" id="IPR004365">
    <property type="entry name" value="NA-bd_OB_tRNA"/>
</dbReference>
<dbReference type="NCBIfam" id="TIGR00459">
    <property type="entry name" value="aspS_bact"/>
    <property type="match status" value="1"/>
</dbReference>
<dbReference type="NCBIfam" id="NF001750">
    <property type="entry name" value="PRK00476.1"/>
    <property type="match status" value="1"/>
</dbReference>
<dbReference type="PANTHER" id="PTHR22594:SF5">
    <property type="entry name" value="ASPARTATE--TRNA LIGASE, MITOCHONDRIAL"/>
    <property type="match status" value="1"/>
</dbReference>
<dbReference type="PANTHER" id="PTHR22594">
    <property type="entry name" value="ASPARTYL/LYSYL-TRNA SYNTHETASE"/>
    <property type="match status" value="1"/>
</dbReference>
<dbReference type="Pfam" id="PF02938">
    <property type="entry name" value="GAD"/>
    <property type="match status" value="1"/>
</dbReference>
<dbReference type="Pfam" id="PF00152">
    <property type="entry name" value="tRNA-synt_2"/>
    <property type="match status" value="1"/>
</dbReference>
<dbReference type="Pfam" id="PF01336">
    <property type="entry name" value="tRNA_anti-codon"/>
    <property type="match status" value="1"/>
</dbReference>
<dbReference type="PRINTS" id="PR01042">
    <property type="entry name" value="TRNASYNTHASP"/>
</dbReference>
<dbReference type="SUPFAM" id="SSF55681">
    <property type="entry name" value="Class II aaRS and biotin synthetases"/>
    <property type="match status" value="1"/>
</dbReference>
<dbReference type="SUPFAM" id="SSF55261">
    <property type="entry name" value="GAD domain-like"/>
    <property type="match status" value="1"/>
</dbReference>
<dbReference type="SUPFAM" id="SSF50249">
    <property type="entry name" value="Nucleic acid-binding proteins"/>
    <property type="match status" value="1"/>
</dbReference>
<dbReference type="PROSITE" id="PS50862">
    <property type="entry name" value="AA_TRNA_LIGASE_II"/>
    <property type="match status" value="1"/>
</dbReference>
<accession>Q112K0</accession>
<reference key="1">
    <citation type="journal article" date="2015" name="Proc. Natl. Acad. Sci. U.S.A.">
        <title>Trichodesmium genome maintains abundant, widespread noncoding DNA in situ, despite oligotrophic lifestyle.</title>
        <authorList>
            <person name="Walworth N."/>
            <person name="Pfreundt U."/>
            <person name="Nelson W.C."/>
            <person name="Mincer T."/>
            <person name="Heidelberg J.F."/>
            <person name="Fu F."/>
            <person name="Waterbury J.B."/>
            <person name="Glavina del Rio T."/>
            <person name="Goodwin L."/>
            <person name="Kyrpides N.C."/>
            <person name="Land M.L."/>
            <person name="Woyke T."/>
            <person name="Hutchins D.A."/>
            <person name="Hess W.R."/>
            <person name="Webb E.A."/>
        </authorList>
    </citation>
    <scope>NUCLEOTIDE SEQUENCE [LARGE SCALE GENOMIC DNA]</scope>
    <source>
        <strain>IMS101</strain>
    </source>
</reference>
<name>SYDND_TRIEI</name>
<organism>
    <name type="scientific">Trichodesmium erythraeum (strain IMS101)</name>
    <dbReference type="NCBI Taxonomy" id="203124"/>
    <lineage>
        <taxon>Bacteria</taxon>
        <taxon>Bacillati</taxon>
        <taxon>Cyanobacteriota</taxon>
        <taxon>Cyanophyceae</taxon>
        <taxon>Oscillatoriophycideae</taxon>
        <taxon>Oscillatoriales</taxon>
        <taxon>Microcoleaceae</taxon>
        <taxon>Trichodesmium</taxon>
    </lineage>
</organism>
<protein>
    <recommendedName>
        <fullName evidence="1">Aspartate--tRNA(Asp/Asn) ligase</fullName>
        <ecNumber evidence="1">6.1.1.23</ecNumber>
    </recommendedName>
    <alternativeName>
        <fullName evidence="1">Aspartyl-tRNA synthetase</fullName>
        <shortName evidence="1">AspRS</shortName>
    </alternativeName>
    <alternativeName>
        <fullName evidence="1">Non-discriminating aspartyl-tRNA synthetase</fullName>
        <shortName evidence="1">ND-AspRS</shortName>
    </alternativeName>
</protein>
<keyword id="KW-0030">Aminoacyl-tRNA synthetase</keyword>
<keyword id="KW-0067">ATP-binding</keyword>
<keyword id="KW-0963">Cytoplasm</keyword>
<keyword id="KW-0436">Ligase</keyword>
<keyword id="KW-0547">Nucleotide-binding</keyword>
<keyword id="KW-0648">Protein biosynthesis</keyword>
<evidence type="ECO:0000255" key="1">
    <source>
        <dbReference type="HAMAP-Rule" id="MF_00044"/>
    </source>
</evidence>
<gene>
    <name evidence="1" type="primary">aspS</name>
    <name type="ordered locus">Tery_2354</name>
</gene>
<comment type="function">
    <text evidence="1">Aspartyl-tRNA synthetase with relaxed tRNA specificity since it is able to aspartylate not only its cognate tRNA(Asp) but also tRNA(Asn). Reaction proceeds in two steps: L-aspartate is first activated by ATP to form Asp-AMP and then transferred to the acceptor end of tRNA(Asp/Asn).</text>
</comment>
<comment type="catalytic activity">
    <reaction evidence="1">
        <text>tRNA(Asx) + L-aspartate + ATP = L-aspartyl-tRNA(Asx) + AMP + diphosphate</text>
        <dbReference type="Rhea" id="RHEA:18349"/>
        <dbReference type="Rhea" id="RHEA-COMP:9710"/>
        <dbReference type="Rhea" id="RHEA-COMP:9711"/>
        <dbReference type="ChEBI" id="CHEBI:29991"/>
        <dbReference type="ChEBI" id="CHEBI:30616"/>
        <dbReference type="ChEBI" id="CHEBI:33019"/>
        <dbReference type="ChEBI" id="CHEBI:78442"/>
        <dbReference type="ChEBI" id="CHEBI:78516"/>
        <dbReference type="ChEBI" id="CHEBI:456215"/>
        <dbReference type="EC" id="6.1.1.23"/>
    </reaction>
</comment>
<comment type="subunit">
    <text evidence="1">Homodimer.</text>
</comment>
<comment type="subcellular location">
    <subcellularLocation>
        <location evidence="1">Cytoplasm</location>
    </subcellularLocation>
</comment>
<comment type="similarity">
    <text evidence="1">Belongs to the class-II aminoacyl-tRNA synthetase family. Type 1 subfamily.</text>
</comment>
<proteinExistence type="inferred from homology"/>
<feature type="chain" id="PRO_1000006778" description="Aspartate--tRNA(Asp/Asn) ligase">
    <location>
        <begin position="1"/>
        <end position="595"/>
    </location>
</feature>
<feature type="region of interest" description="Aspartate" evidence="1">
    <location>
        <begin position="202"/>
        <end position="205"/>
    </location>
</feature>
<feature type="binding site" evidence="1">
    <location>
        <position position="178"/>
    </location>
    <ligand>
        <name>L-aspartate</name>
        <dbReference type="ChEBI" id="CHEBI:29991"/>
    </ligand>
</feature>
<feature type="binding site" evidence="1">
    <location>
        <begin position="224"/>
        <end position="226"/>
    </location>
    <ligand>
        <name>ATP</name>
        <dbReference type="ChEBI" id="CHEBI:30616"/>
    </ligand>
</feature>
<feature type="binding site" evidence="1">
    <location>
        <position position="224"/>
    </location>
    <ligand>
        <name>L-aspartate</name>
        <dbReference type="ChEBI" id="CHEBI:29991"/>
    </ligand>
</feature>
<feature type="binding site" evidence="1">
    <location>
        <position position="233"/>
    </location>
    <ligand>
        <name>ATP</name>
        <dbReference type="ChEBI" id="CHEBI:30616"/>
    </ligand>
</feature>
<feature type="binding site" evidence="1">
    <location>
        <position position="458"/>
    </location>
    <ligand>
        <name>L-aspartate</name>
        <dbReference type="ChEBI" id="CHEBI:29991"/>
    </ligand>
</feature>
<feature type="binding site" evidence="1">
    <location>
        <position position="488"/>
    </location>
    <ligand>
        <name>ATP</name>
        <dbReference type="ChEBI" id="CHEBI:30616"/>
    </ligand>
</feature>
<feature type="binding site" evidence="1">
    <location>
        <position position="495"/>
    </location>
    <ligand>
        <name>L-aspartate</name>
        <dbReference type="ChEBI" id="CHEBI:29991"/>
    </ligand>
</feature>
<feature type="binding site" evidence="1">
    <location>
        <begin position="540"/>
        <end position="543"/>
    </location>
    <ligand>
        <name>ATP</name>
        <dbReference type="ChEBI" id="CHEBI:30616"/>
    </ligand>
</feature>
<feature type="site" description="Important for tRNA non-discrimination" evidence="1">
    <location>
        <position position="30"/>
    </location>
</feature>
<sequence length="595" mass="67499">MRTHYCGQVNSNNIEETVNLCGWVDRRRDHGGVIFLDLRDRSGLIQIVSDPERTPDSYQIAGDIRNEYVVQITGRVSRRPEESLNPKLPTGEIEIYADDIQLLNGLGKQLPFQVSTAETEAVREELRLKYRYLDLRRERMTRNLLLRHEVIKAIRRFLEDEQNFVEIETPILTRSTPEGARDYLVPSRVHPGEWFALPQSPQLFKQILMVSGFDRYYQIARCFRDEDLRADRQPEFTQLDMEMSFMSQEEILQLNEKLVAYIFQKVKGIDLPLPFPRLTYTEAMERYGSDKPDVRFGLELVDVSDLMKDSGFKVFSGAIAKGGIVKVLPIPGGNDAISNVRIKPGGDLFKEASEVGAKGLAYVRVKEGGKIDTIGAIKDNLTDEQKQELLKRTNAQPGHLLLFAADDANTVNKTLDRLRLVIGEQLGLIDQDKISLLWVTDFPMFEWNEDEQRLEALHHPFTAPHPDDINDLKTARAQAYDLVFNGYEVGGGSLRIYQRDVQEKVFEAIGLSAQEADNKFGFLLEAFEYGTPPHGGIAYGLDRLVMLLAVEESIRDVIAFPKTQQAKCLLANAPSEVDKKQLKELHVSSISKAKS</sequence>